<keyword id="KW-0963">Cytoplasm</keyword>
<keyword id="KW-0489">Methyltransferase</keyword>
<keyword id="KW-1185">Reference proteome</keyword>
<keyword id="KW-0698">rRNA processing</keyword>
<keyword id="KW-0949">S-adenosyl-L-methionine</keyword>
<keyword id="KW-0808">Transferase</keyword>
<feature type="chain" id="PRO_1000185303" description="Ribosomal RNA large subunit methyltransferase E">
    <location>
        <begin position="1"/>
        <end position="207"/>
    </location>
</feature>
<feature type="active site" description="Proton acceptor" evidence="1">
    <location>
        <position position="161"/>
    </location>
</feature>
<feature type="binding site" evidence="1">
    <location>
        <position position="60"/>
    </location>
    <ligand>
        <name>S-adenosyl-L-methionine</name>
        <dbReference type="ChEBI" id="CHEBI:59789"/>
    </ligand>
</feature>
<feature type="binding site" evidence="1">
    <location>
        <position position="62"/>
    </location>
    <ligand>
        <name>S-adenosyl-L-methionine</name>
        <dbReference type="ChEBI" id="CHEBI:59789"/>
    </ligand>
</feature>
<feature type="binding site" evidence="1">
    <location>
        <position position="80"/>
    </location>
    <ligand>
        <name>S-adenosyl-L-methionine</name>
        <dbReference type="ChEBI" id="CHEBI:59789"/>
    </ligand>
</feature>
<feature type="binding site" evidence="1">
    <location>
        <position position="96"/>
    </location>
    <ligand>
        <name>S-adenosyl-L-methionine</name>
        <dbReference type="ChEBI" id="CHEBI:59789"/>
    </ligand>
</feature>
<feature type="binding site" evidence="1">
    <location>
        <position position="121"/>
    </location>
    <ligand>
        <name>S-adenosyl-L-methionine</name>
        <dbReference type="ChEBI" id="CHEBI:59789"/>
    </ligand>
</feature>
<protein>
    <recommendedName>
        <fullName evidence="1">Ribosomal RNA large subunit methyltransferase E</fullName>
        <ecNumber evidence="1">2.1.1.166</ecNumber>
    </recommendedName>
    <alternativeName>
        <fullName evidence="1">23S rRNA Um2552 methyltransferase</fullName>
    </alternativeName>
    <alternativeName>
        <fullName evidence="1">rRNA (uridine-2'-O-)-methyltransferase</fullName>
    </alternativeName>
</protein>
<name>RLME_THISH</name>
<comment type="function">
    <text evidence="1">Specifically methylates the uridine in position 2552 of 23S rRNA at the 2'-O position of the ribose in the fully assembled 50S ribosomal subunit.</text>
</comment>
<comment type="catalytic activity">
    <reaction evidence="1">
        <text>uridine(2552) in 23S rRNA + S-adenosyl-L-methionine = 2'-O-methyluridine(2552) in 23S rRNA + S-adenosyl-L-homocysteine + H(+)</text>
        <dbReference type="Rhea" id="RHEA:42720"/>
        <dbReference type="Rhea" id="RHEA-COMP:10202"/>
        <dbReference type="Rhea" id="RHEA-COMP:10203"/>
        <dbReference type="ChEBI" id="CHEBI:15378"/>
        <dbReference type="ChEBI" id="CHEBI:57856"/>
        <dbReference type="ChEBI" id="CHEBI:59789"/>
        <dbReference type="ChEBI" id="CHEBI:65315"/>
        <dbReference type="ChEBI" id="CHEBI:74478"/>
        <dbReference type="EC" id="2.1.1.166"/>
    </reaction>
</comment>
<comment type="subcellular location">
    <subcellularLocation>
        <location evidence="1">Cytoplasm</location>
    </subcellularLocation>
</comment>
<comment type="similarity">
    <text evidence="1">Belongs to the class I-like SAM-binding methyltransferase superfamily. RNA methyltransferase RlmE family.</text>
</comment>
<dbReference type="EC" id="2.1.1.166" evidence="1"/>
<dbReference type="EMBL" id="CP001339">
    <property type="protein sequence ID" value="ACL72068.1"/>
    <property type="molecule type" value="Genomic_DNA"/>
</dbReference>
<dbReference type="RefSeq" id="WP_012637552.1">
    <property type="nucleotide sequence ID" value="NC_011901.1"/>
</dbReference>
<dbReference type="SMR" id="B8GNX9"/>
<dbReference type="STRING" id="396588.Tgr7_0980"/>
<dbReference type="KEGG" id="tgr:Tgr7_0980"/>
<dbReference type="eggNOG" id="COG0293">
    <property type="taxonomic scope" value="Bacteria"/>
</dbReference>
<dbReference type="HOGENOM" id="CLU_009422_4_0_6"/>
<dbReference type="OrthoDB" id="9790080at2"/>
<dbReference type="Proteomes" id="UP000002383">
    <property type="component" value="Chromosome"/>
</dbReference>
<dbReference type="GO" id="GO:0005737">
    <property type="term" value="C:cytoplasm"/>
    <property type="evidence" value="ECO:0007669"/>
    <property type="project" value="UniProtKB-SubCell"/>
</dbReference>
<dbReference type="GO" id="GO:0008650">
    <property type="term" value="F:rRNA (uridine-2'-O-)-methyltransferase activity"/>
    <property type="evidence" value="ECO:0007669"/>
    <property type="project" value="UniProtKB-UniRule"/>
</dbReference>
<dbReference type="FunFam" id="3.40.50.150:FF:000005">
    <property type="entry name" value="Ribosomal RNA large subunit methyltransferase E"/>
    <property type="match status" value="1"/>
</dbReference>
<dbReference type="Gene3D" id="3.40.50.150">
    <property type="entry name" value="Vaccinia Virus protein VP39"/>
    <property type="match status" value="1"/>
</dbReference>
<dbReference type="HAMAP" id="MF_01547">
    <property type="entry name" value="RNA_methyltr_E"/>
    <property type="match status" value="1"/>
</dbReference>
<dbReference type="InterPro" id="IPR050082">
    <property type="entry name" value="RNA_methyltr_RlmE"/>
</dbReference>
<dbReference type="InterPro" id="IPR002877">
    <property type="entry name" value="RNA_MeTrfase_FtsJ_dom"/>
</dbReference>
<dbReference type="InterPro" id="IPR015507">
    <property type="entry name" value="rRNA-MeTfrase_E"/>
</dbReference>
<dbReference type="InterPro" id="IPR029063">
    <property type="entry name" value="SAM-dependent_MTases_sf"/>
</dbReference>
<dbReference type="NCBIfam" id="NF008390">
    <property type="entry name" value="PRK11188.1"/>
    <property type="match status" value="1"/>
</dbReference>
<dbReference type="PANTHER" id="PTHR10920">
    <property type="entry name" value="RIBOSOMAL RNA METHYLTRANSFERASE"/>
    <property type="match status" value="1"/>
</dbReference>
<dbReference type="PANTHER" id="PTHR10920:SF18">
    <property type="entry name" value="RRNA METHYLTRANSFERASE 2, MITOCHONDRIAL"/>
    <property type="match status" value="1"/>
</dbReference>
<dbReference type="Pfam" id="PF01728">
    <property type="entry name" value="FtsJ"/>
    <property type="match status" value="1"/>
</dbReference>
<dbReference type="PIRSF" id="PIRSF005461">
    <property type="entry name" value="23S_rRNA_mtase"/>
    <property type="match status" value="1"/>
</dbReference>
<dbReference type="SUPFAM" id="SSF53335">
    <property type="entry name" value="S-adenosyl-L-methionine-dependent methyltransferases"/>
    <property type="match status" value="1"/>
</dbReference>
<organism>
    <name type="scientific">Thioalkalivibrio sulfidiphilus (strain HL-EbGR7)</name>
    <dbReference type="NCBI Taxonomy" id="396588"/>
    <lineage>
        <taxon>Bacteria</taxon>
        <taxon>Pseudomonadati</taxon>
        <taxon>Pseudomonadota</taxon>
        <taxon>Gammaproteobacteria</taxon>
        <taxon>Chromatiales</taxon>
        <taxon>Ectothiorhodospiraceae</taxon>
        <taxon>Thioalkalivibrio</taxon>
    </lineage>
</organism>
<gene>
    <name evidence="1" type="primary">rlmE</name>
    <name evidence="1" type="synonym">ftsJ</name>
    <name evidence="1" type="synonym">rrmJ</name>
    <name type="ordered locus">Tgr7_0980</name>
</gene>
<sequence length="207" mass="23195">MPRSKSSHRWLKEHFDDEYVKRAQQEGYRSRAVYKLQEIQERDRLLRQGMTVVDLGAAPGGWTQYAAGLVGKHGRVVASDILPMDPLPGVTIVEGDFREAEVLERLLAVLGEGGADLVMSDMAPNMSGMDAVDQPRAMYLAELAAELARTVLKPGGDFLVKLFQGAEFDEYVRMLRTEYDKVSIRKPKASRPRSREVYAVARGRKVV</sequence>
<accession>B8GNX9</accession>
<proteinExistence type="inferred from homology"/>
<reference key="1">
    <citation type="journal article" date="2011" name="Stand. Genomic Sci.">
        <title>Complete genome sequence of 'Thioalkalivibrio sulfidophilus' HL-EbGr7.</title>
        <authorList>
            <person name="Muyzer G."/>
            <person name="Sorokin D.Y."/>
            <person name="Mavromatis K."/>
            <person name="Lapidus A."/>
            <person name="Clum A."/>
            <person name="Ivanova N."/>
            <person name="Pati A."/>
            <person name="d'Haeseleer P."/>
            <person name="Woyke T."/>
            <person name="Kyrpides N.C."/>
        </authorList>
    </citation>
    <scope>NUCLEOTIDE SEQUENCE [LARGE SCALE GENOMIC DNA]</scope>
    <source>
        <strain>HL-EbGR7</strain>
    </source>
</reference>
<evidence type="ECO:0000255" key="1">
    <source>
        <dbReference type="HAMAP-Rule" id="MF_01547"/>
    </source>
</evidence>